<accession>B1V8R6</accession>
<name>ENO_PHYAS</name>
<keyword id="KW-0963">Cytoplasm</keyword>
<keyword id="KW-0324">Glycolysis</keyword>
<keyword id="KW-0456">Lyase</keyword>
<keyword id="KW-0460">Magnesium</keyword>
<keyword id="KW-0479">Metal-binding</keyword>
<keyword id="KW-1185">Reference proteome</keyword>
<keyword id="KW-0964">Secreted</keyword>
<organism>
    <name type="scientific">Phytoplasma australiense</name>
    <dbReference type="NCBI Taxonomy" id="59748"/>
    <lineage>
        <taxon>Bacteria</taxon>
        <taxon>Bacillati</taxon>
        <taxon>Mycoplasmatota</taxon>
        <taxon>Mollicutes</taxon>
        <taxon>Acholeplasmatales</taxon>
        <taxon>Acholeplasmataceae</taxon>
        <taxon>Candidatus Phytoplasma</taxon>
        <taxon>16SrXII (Stolbur group)</taxon>
    </lineage>
</organism>
<reference key="1">
    <citation type="journal article" date="2008" name="J. Bacteriol.">
        <title>Comparative genome analysis of 'Candidatus Phytoplasma australiense' (subgroup tuf-Australia I; rp-A) and 'Ca. Phytoplasma asteris' strains OY-M and AY-WB.</title>
        <authorList>
            <person name="Tran-Nguyen L.T."/>
            <person name="Kube M."/>
            <person name="Schneider B."/>
            <person name="Reinhardt R."/>
            <person name="Gibb K.S."/>
        </authorList>
    </citation>
    <scope>NUCLEOTIDE SEQUENCE [LARGE SCALE GENOMIC DNA]</scope>
</reference>
<dbReference type="EC" id="4.2.1.11" evidence="1"/>
<dbReference type="EMBL" id="AM422018">
    <property type="protein sequence ID" value="CAM11394.1"/>
    <property type="molecule type" value="Genomic_DNA"/>
</dbReference>
<dbReference type="SMR" id="B1V8R6"/>
<dbReference type="STRING" id="59748.PA0059"/>
<dbReference type="KEGG" id="pal:PA0059"/>
<dbReference type="eggNOG" id="COG0148">
    <property type="taxonomic scope" value="Bacteria"/>
</dbReference>
<dbReference type="UniPathway" id="UPA00109">
    <property type="reaction ID" value="UER00187"/>
</dbReference>
<dbReference type="Proteomes" id="UP000008323">
    <property type="component" value="Chromosome"/>
</dbReference>
<dbReference type="GO" id="GO:0009986">
    <property type="term" value="C:cell surface"/>
    <property type="evidence" value="ECO:0007669"/>
    <property type="project" value="UniProtKB-SubCell"/>
</dbReference>
<dbReference type="GO" id="GO:0005576">
    <property type="term" value="C:extracellular region"/>
    <property type="evidence" value="ECO:0007669"/>
    <property type="project" value="UniProtKB-SubCell"/>
</dbReference>
<dbReference type="GO" id="GO:0000015">
    <property type="term" value="C:phosphopyruvate hydratase complex"/>
    <property type="evidence" value="ECO:0007669"/>
    <property type="project" value="InterPro"/>
</dbReference>
<dbReference type="GO" id="GO:0000287">
    <property type="term" value="F:magnesium ion binding"/>
    <property type="evidence" value="ECO:0007669"/>
    <property type="project" value="UniProtKB-UniRule"/>
</dbReference>
<dbReference type="GO" id="GO:0004634">
    <property type="term" value="F:phosphopyruvate hydratase activity"/>
    <property type="evidence" value="ECO:0007669"/>
    <property type="project" value="UniProtKB-UniRule"/>
</dbReference>
<dbReference type="GO" id="GO:0006096">
    <property type="term" value="P:glycolytic process"/>
    <property type="evidence" value="ECO:0007669"/>
    <property type="project" value="UniProtKB-UniRule"/>
</dbReference>
<dbReference type="CDD" id="cd03313">
    <property type="entry name" value="enolase"/>
    <property type="match status" value="1"/>
</dbReference>
<dbReference type="FunFam" id="3.20.20.120:FF:000001">
    <property type="entry name" value="Enolase"/>
    <property type="match status" value="1"/>
</dbReference>
<dbReference type="FunFam" id="3.30.390.10:FF:000001">
    <property type="entry name" value="Enolase"/>
    <property type="match status" value="1"/>
</dbReference>
<dbReference type="Gene3D" id="3.20.20.120">
    <property type="entry name" value="Enolase-like C-terminal domain"/>
    <property type="match status" value="1"/>
</dbReference>
<dbReference type="Gene3D" id="3.30.390.10">
    <property type="entry name" value="Enolase-like, N-terminal domain"/>
    <property type="match status" value="1"/>
</dbReference>
<dbReference type="HAMAP" id="MF_00318">
    <property type="entry name" value="Enolase"/>
    <property type="match status" value="1"/>
</dbReference>
<dbReference type="InterPro" id="IPR000941">
    <property type="entry name" value="Enolase"/>
</dbReference>
<dbReference type="InterPro" id="IPR036849">
    <property type="entry name" value="Enolase-like_C_sf"/>
</dbReference>
<dbReference type="InterPro" id="IPR029017">
    <property type="entry name" value="Enolase-like_N"/>
</dbReference>
<dbReference type="InterPro" id="IPR020810">
    <property type="entry name" value="Enolase_C"/>
</dbReference>
<dbReference type="InterPro" id="IPR020809">
    <property type="entry name" value="Enolase_CS"/>
</dbReference>
<dbReference type="InterPro" id="IPR020811">
    <property type="entry name" value="Enolase_N"/>
</dbReference>
<dbReference type="NCBIfam" id="TIGR01060">
    <property type="entry name" value="eno"/>
    <property type="match status" value="1"/>
</dbReference>
<dbReference type="PANTHER" id="PTHR11902">
    <property type="entry name" value="ENOLASE"/>
    <property type="match status" value="1"/>
</dbReference>
<dbReference type="PANTHER" id="PTHR11902:SF1">
    <property type="entry name" value="ENOLASE"/>
    <property type="match status" value="1"/>
</dbReference>
<dbReference type="Pfam" id="PF00113">
    <property type="entry name" value="Enolase_C"/>
    <property type="match status" value="1"/>
</dbReference>
<dbReference type="Pfam" id="PF03952">
    <property type="entry name" value="Enolase_N"/>
    <property type="match status" value="1"/>
</dbReference>
<dbReference type="PIRSF" id="PIRSF001400">
    <property type="entry name" value="Enolase"/>
    <property type="match status" value="1"/>
</dbReference>
<dbReference type="PRINTS" id="PR00148">
    <property type="entry name" value="ENOLASE"/>
</dbReference>
<dbReference type="SFLD" id="SFLDS00001">
    <property type="entry name" value="Enolase"/>
    <property type="match status" value="1"/>
</dbReference>
<dbReference type="SFLD" id="SFLDF00002">
    <property type="entry name" value="enolase"/>
    <property type="match status" value="1"/>
</dbReference>
<dbReference type="SMART" id="SM01192">
    <property type="entry name" value="Enolase_C"/>
    <property type="match status" value="1"/>
</dbReference>
<dbReference type="SMART" id="SM01193">
    <property type="entry name" value="Enolase_N"/>
    <property type="match status" value="1"/>
</dbReference>
<dbReference type="SUPFAM" id="SSF51604">
    <property type="entry name" value="Enolase C-terminal domain-like"/>
    <property type="match status" value="1"/>
</dbReference>
<dbReference type="SUPFAM" id="SSF54826">
    <property type="entry name" value="Enolase N-terminal domain-like"/>
    <property type="match status" value="1"/>
</dbReference>
<dbReference type="PROSITE" id="PS00164">
    <property type="entry name" value="ENOLASE"/>
    <property type="match status" value="1"/>
</dbReference>
<proteinExistence type="inferred from homology"/>
<gene>
    <name evidence="1" type="primary">eno</name>
    <name type="ordered locus">PA0059</name>
</gene>
<feature type="chain" id="PRO_1000119578" description="Enolase">
    <location>
        <begin position="1"/>
        <end position="430"/>
    </location>
</feature>
<feature type="active site" description="Proton donor" evidence="1">
    <location>
        <position position="205"/>
    </location>
</feature>
<feature type="active site" description="Proton acceptor" evidence="1">
    <location>
        <position position="340"/>
    </location>
</feature>
<feature type="binding site" evidence="1">
    <location>
        <position position="163"/>
    </location>
    <ligand>
        <name>(2R)-2-phosphoglycerate</name>
        <dbReference type="ChEBI" id="CHEBI:58289"/>
    </ligand>
</feature>
<feature type="binding site" evidence="1">
    <location>
        <position position="242"/>
    </location>
    <ligand>
        <name>Mg(2+)</name>
        <dbReference type="ChEBI" id="CHEBI:18420"/>
    </ligand>
</feature>
<feature type="binding site" evidence="1">
    <location>
        <position position="288"/>
    </location>
    <ligand>
        <name>Mg(2+)</name>
        <dbReference type="ChEBI" id="CHEBI:18420"/>
    </ligand>
</feature>
<feature type="binding site" evidence="1">
    <location>
        <position position="315"/>
    </location>
    <ligand>
        <name>Mg(2+)</name>
        <dbReference type="ChEBI" id="CHEBI:18420"/>
    </ligand>
</feature>
<feature type="binding site" evidence="1">
    <location>
        <position position="340"/>
    </location>
    <ligand>
        <name>(2R)-2-phosphoglycerate</name>
        <dbReference type="ChEBI" id="CHEBI:58289"/>
    </ligand>
</feature>
<feature type="binding site" evidence="1">
    <location>
        <position position="369"/>
    </location>
    <ligand>
        <name>(2R)-2-phosphoglycerate</name>
        <dbReference type="ChEBI" id="CHEBI:58289"/>
    </ligand>
</feature>
<feature type="binding site" evidence="1">
    <location>
        <position position="370"/>
    </location>
    <ligand>
        <name>(2R)-2-phosphoglycerate</name>
        <dbReference type="ChEBI" id="CHEBI:58289"/>
    </ligand>
</feature>
<feature type="binding site" evidence="1">
    <location>
        <position position="391"/>
    </location>
    <ligand>
        <name>(2R)-2-phosphoglycerate</name>
        <dbReference type="ChEBI" id="CHEBI:58289"/>
    </ligand>
</feature>
<comment type="function">
    <text evidence="1">Catalyzes the reversible conversion of 2-phosphoglycerate (2-PG) into phosphoenolpyruvate (PEP). It is essential for the degradation of carbohydrates via glycolysis.</text>
</comment>
<comment type="catalytic activity">
    <reaction evidence="1">
        <text>(2R)-2-phosphoglycerate = phosphoenolpyruvate + H2O</text>
        <dbReference type="Rhea" id="RHEA:10164"/>
        <dbReference type="ChEBI" id="CHEBI:15377"/>
        <dbReference type="ChEBI" id="CHEBI:58289"/>
        <dbReference type="ChEBI" id="CHEBI:58702"/>
        <dbReference type="EC" id="4.2.1.11"/>
    </reaction>
</comment>
<comment type="cofactor">
    <cofactor evidence="1">
        <name>Mg(2+)</name>
        <dbReference type="ChEBI" id="CHEBI:18420"/>
    </cofactor>
    <text evidence="1">Binds a second Mg(2+) ion via substrate during catalysis.</text>
</comment>
<comment type="pathway">
    <text evidence="1">Carbohydrate degradation; glycolysis; pyruvate from D-glyceraldehyde 3-phosphate: step 4/5.</text>
</comment>
<comment type="subcellular location">
    <subcellularLocation>
        <location evidence="1">Cytoplasm</location>
    </subcellularLocation>
    <subcellularLocation>
        <location evidence="1">Secreted</location>
    </subcellularLocation>
    <subcellularLocation>
        <location evidence="1">Cell surface</location>
    </subcellularLocation>
    <text evidence="1">Fractions of enolase are present in both the cytoplasm and on the cell surface.</text>
</comment>
<comment type="similarity">
    <text evidence="1">Belongs to the enolase family.</text>
</comment>
<sequence>MPYIKTINSLEVLDSRGNPTVEVEVITLSGAKGKTLVPSGASTGEHEAVELRDSDSKRYLGKGVLKAVENVATVIEPRLQNLSVLDQALIDQTLIQLDGTPNKSKLGANAILGVSLACARAAADYLGLELYEYIAGIAPKQMPVPMMNVINGGAHASNSVDFQEFMILPTGAPSFKEALRYGAEVFHHLGKILKQKGLPTTVGDEGGYAPDLNSNKEALQIILEAIQNAGYVPGKDIFLGMDVAASEFYDRETKKYLLASENNKTFSSEELVSYYEQLINKYPILSIEDGLDQNDWDGWKLLTQKLGQKVQLVGDDLFVTNTQKIQEGIDKQIANSVLIKLNQIGTLTETLEAIEMAKKASYTVVISHRSGETEDTTIADLAVAMNTGQIKTGSCSRTDRIAKYNQLLRIEKNMSNPSYLGLKVFYNLKK</sequence>
<protein>
    <recommendedName>
        <fullName evidence="1">Enolase</fullName>
        <ecNumber evidence="1">4.2.1.11</ecNumber>
    </recommendedName>
    <alternativeName>
        <fullName evidence="1">2-phospho-D-glycerate hydro-lyase</fullName>
    </alternativeName>
    <alternativeName>
        <fullName evidence="1">2-phosphoglycerate dehydratase</fullName>
    </alternativeName>
</protein>
<evidence type="ECO:0000255" key="1">
    <source>
        <dbReference type="HAMAP-Rule" id="MF_00318"/>
    </source>
</evidence>